<geneLocation type="chloroplast"/>
<protein>
    <recommendedName>
        <fullName evidence="2">Small ribosomal subunit protein uS15c</fullName>
    </recommendedName>
    <alternativeName>
        <fullName>30S ribosomal protein S15, chloroplastic</fullName>
    </alternativeName>
</protein>
<dbReference type="EMBL" id="AP009371">
    <property type="protein sequence ID" value="BAF50257.1"/>
    <property type="molecule type" value="Genomic_DNA"/>
</dbReference>
<dbReference type="RefSeq" id="YP_001123432.1">
    <property type="nucleotide sequence ID" value="NC_009270.1"/>
</dbReference>
<dbReference type="SMR" id="A4QKQ2"/>
<dbReference type="GeneID" id="4961716"/>
<dbReference type="GO" id="GO:0009507">
    <property type="term" value="C:chloroplast"/>
    <property type="evidence" value="ECO:0007669"/>
    <property type="project" value="UniProtKB-SubCell"/>
</dbReference>
<dbReference type="GO" id="GO:1990904">
    <property type="term" value="C:ribonucleoprotein complex"/>
    <property type="evidence" value="ECO:0007669"/>
    <property type="project" value="UniProtKB-KW"/>
</dbReference>
<dbReference type="GO" id="GO:0005840">
    <property type="term" value="C:ribosome"/>
    <property type="evidence" value="ECO:0007669"/>
    <property type="project" value="UniProtKB-KW"/>
</dbReference>
<dbReference type="GO" id="GO:0003735">
    <property type="term" value="F:structural constituent of ribosome"/>
    <property type="evidence" value="ECO:0007669"/>
    <property type="project" value="InterPro"/>
</dbReference>
<dbReference type="GO" id="GO:0006412">
    <property type="term" value="P:translation"/>
    <property type="evidence" value="ECO:0007669"/>
    <property type="project" value="UniProtKB-UniRule"/>
</dbReference>
<dbReference type="CDD" id="cd00353">
    <property type="entry name" value="Ribosomal_S15p_S13e"/>
    <property type="match status" value="1"/>
</dbReference>
<dbReference type="FunFam" id="1.10.287.10:FF:000011">
    <property type="entry name" value="30S ribosomal protein S15, chloroplastic"/>
    <property type="match status" value="1"/>
</dbReference>
<dbReference type="Gene3D" id="1.10.287.10">
    <property type="entry name" value="S15/NS1, RNA-binding"/>
    <property type="match status" value="1"/>
</dbReference>
<dbReference type="HAMAP" id="MF_01343_B">
    <property type="entry name" value="Ribosomal_uS15_B"/>
    <property type="match status" value="1"/>
</dbReference>
<dbReference type="InterPro" id="IPR000589">
    <property type="entry name" value="Ribosomal_uS15"/>
</dbReference>
<dbReference type="InterPro" id="IPR005290">
    <property type="entry name" value="Ribosomal_uS15_bac-type"/>
</dbReference>
<dbReference type="InterPro" id="IPR009068">
    <property type="entry name" value="uS15_NS1_RNA-bd_sf"/>
</dbReference>
<dbReference type="NCBIfam" id="TIGR00952">
    <property type="entry name" value="S15_bact"/>
    <property type="match status" value="1"/>
</dbReference>
<dbReference type="PANTHER" id="PTHR23321">
    <property type="entry name" value="RIBOSOMAL PROTEIN S15, BACTERIAL AND ORGANELLAR"/>
    <property type="match status" value="1"/>
</dbReference>
<dbReference type="PANTHER" id="PTHR23321:SF26">
    <property type="entry name" value="SMALL RIBOSOMAL SUBUNIT PROTEIN US15M"/>
    <property type="match status" value="1"/>
</dbReference>
<dbReference type="Pfam" id="PF00312">
    <property type="entry name" value="Ribosomal_S15"/>
    <property type="match status" value="1"/>
</dbReference>
<dbReference type="SMART" id="SM01387">
    <property type="entry name" value="Ribosomal_S15"/>
    <property type="match status" value="1"/>
</dbReference>
<dbReference type="SUPFAM" id="SSF47060">
    <property type="entry name" value="S15/NS1 RNA-binding domain"/>
    <property type="match status" value="1"/>
</dbReference>
<dbReference type="PROSITE" id="PS00362">
    <property type="entry name" value="RIBOSOMAL_S15"/>
    <property type="match status" value="1"/>
</dbReference>
<gene>
    <name type="primary">rps15</name>
</gene>
<sequence>MIKNTFISFEEQKEESRGSVEFQVFSFTNKIRRLTSHLELHRKDFLSQRGLRKILGKRQRLLAYLSKKNRVRYKELINQLNIRELKTR</sequence>
<feature type="chain" id="PRO_0000354241" description="Small ribosomal subunit protein uS15c">
    <location>
        <begin position="1"/>
        <end position="88"/>
    </location>
</feature>
<proteinExistence type="inferred from homology"/>
<evidence type="ECO:0000250" key="1"/>
<evidence type="ECO:0000305" key="2"/>
<keyword id="KW-0150">Chloroplast</keyword>
<keyword id="KW-0934">Plastid</keyword>
<keyword id="KW-0687">Ribonucleoprotein</keyword>
<keyword id="KW-0689">Ribosomal protein</keyword>
<accession>A4QKQ2</accession>
<organism>
    <name type="scientific">Capsella bursa-pastoris</name>
    <name type="common">Shepherd's purse</name>
    <name type="synonym">Thlaspi bursa-pastoris</name>
    <dbReference type="NCBI Taxonomy" id="3719"/>
    <lineage>
        <taxon>Eukaryota</taxon>
        <taxon>Viridiplantae</taxon>
        <taxon>Streptophyta</taxon>
        <taxon>Embryophyta</taxon>
        <taxon>Tracheophyta</taxon>
        <taxon>Spermatophyta</taxon>
        <taxon>Magnoliopsida</taxon>
        <taxon>eudicotyledons</taxon>
        <taxon>Gunneridae</taxon>
        <taxon>Pentapetalae</taxon>
        <taxon>rosids</taxon>
        <taxon>malvids</taxon>
        <taxon>Brassicales</taxon>
        <taxon>Brassicaceae</taxon>
        <taxon>Camelineae</taxon>
        <taxon>Capsella</taxon>
    </lineage>
</organism>
<comment type="subunit">
    <text evidence="1">Part of the 30S ribosomal subunit.</text>
</comment>
<comment type="subcellular location">
    <subcellularLocation>
        <location>Plastid</location>
        <location>Chloroplast</location>
    </subcellularLocation>
</comment>
<comment type="similarity">
    <text evidence="2">Belongs to the universal ribosomal protein uS15 family.</text>
</comment>
<reference key="1">
    <citation type="submission" date="2007-03" db="EMBL/GenBank/DDBJ databases">
        <title>Sequencing analysis of Capsella bursa-pastoris JO22 chloroplast DNA.</title>
        <authorList>
            <person name="Hosouchi T."/>
            <person name="Tsuruoka H."/>
            <person name="Kotani H."/>
        </authorList>
    </citation>
    <scope>NUCLEOTIDE SEQUENCE [LARGE SCALE GENOMIC DNA]</scope>
</reference>
<name>RR15_CAPBU</name>